<reference key="1">
    <citation type="journal article" date="1985" name="EMBO J.">
        <title>Structure and expression of the human haptoglobin locus.</title>
        <authorList>
            <person name="Bensi G."/>
            <person name="Raugei G."/>
            <person name="Klefenz H."/>
            <person name="Cortese R."/>
        </authorList>
    </citation>
    <scope>NUCLEOTIDE SEQUENCE [GENOMIC DNA]</scope>
    <scope>VARIANT ASP-339</scope>
</reference>
<reference key="2">
    <citation type="journal article" date="1985" name="J. Biol. Chem.">
        <title>Nucleotide sequence of the haptoglobin and haptoglobin-related gene pair. The haptoglobin-related gene contains a retrovirus-like element.</title>
        <authorList>
            <person name="Maeda N."/>
        </authorList>
    </citation>
    <scope>NUCLEOTIDE SEQUENCE [GENOMIC DNA]</scope>
    <scope>VARIANT ASP-339</scope>
</reference>
<reference key="3">
    <citation type="journal article" date="1992" name="Genomics">
        <title>Junctions between genes in the haptoglobin gene cluster of primates.</title>
        <authorList>
            <person name="Erickson L.M."/>
            <person name="Kim H.S."/>
            <person name="Maeda N."/>
        </authorList>
    </citation>
    <scope>NUCLEOTIDE SEQUENCE [GENOMIC DNA]</scope>
    <scope>VARIANT ASP-339</scope>
</reference>
<reference key="4">
    <citation type="journal article" date="2004" name="Nature">
        <title>The sequence and analysis of duplication-rich human chromosome 16.</title>
        <authorList>
            <person name="Martin J."/>
            <person name="Han C."/>
            <person name="Gordon L.A."/>
            <person name="Terry A."/>
            <person name="Prabhakar S."/>
            <person name="She X."/>
            <person name="Xie G."/>
            <person name="Hellsten U."/>
            <person name="Chan Y.M."/>
            <person name="Altherr M."/>
            <person name="Couronne O."/>
            <person name="Aerts A."/>
            <person name="Bajorek E."/>
            <person name="Black S."/>
            <person name="Blumer H."/>
            <person name="Branscomb E."/>
            <person name="Brown N.C."/>
            <person name="Bruno W.J."/>
            <person name="Buckingham J.M."/>
            <person name="Callen D.F."/>
            <person name="Campbell C.S."/>
            <person name="Campbell M.L."/>
            <person name="Campbell E.W."/>
            <person name="Caoile C."/>
            <person name="Challacombe J.F."/>
            <person name="Chasteen L.A."/>
            <person name="Chertkov O."/>
            <person name="Chi H.C."/>
            <person name="Christensen M."/>
            <person name="Clark L.M."/>
            <person name="Cohn J.D."/>
            <person name="Denys M."/>
            <person name="Detter J.C."/>
            <person name="Dickson M."/>
            <person name="Dimitrijevic-Bussod M."/>
            <person name="Escobar J."/>
            <person name="Fawcett J.J."/>
            <person name="Flowers D."/>
            <person name="Fotopulos D."/>
            <person name="Glavina T."/>
            <person name="Gomez M."/>
            <person name="Gonzales E."/>
            <person name="Goodstein D."/>
            <person name="Goodwin L.A."/>
            <person name="Grady D.L."/>
            <person name="Grigoriev I."/>
            <person name="Groza M."/>
            <person name="Hammon N."/>
            <person name="Hawkins T."/>
            <person name="Haydu L."/>
            <person name="Hildebrand C.E."/>
            <person name="Huang W."/>
            <person name="Israni S."/>
            <person name="Jett J."/>
            <person name="Jewett P.B."/>
            <person name="Kadner K."/>
            <person name="Kimball H."/>
            <person name="Kobayashi A."/>
            <person name="Krawczyk M.-C."/>
            <person name="Leyba T."/>
            <person name="Longmire J.L."/>
            <person name="Lopez F."/>
            <person name="Lou Y."/>
            <person name="Lowry S."/>
            <person name="Ludeman T."/>
            <person name="Manohar C.F."/>
            <person name="Mark G.A."/>
            <person name="McMurray K.L."/>
            <person name="Meincke L.J."/>
            <person name="Morgan J."/>
            <person name="Moyzis R.K."/>
            <person name="Mundt M.O."/>
            <person name="Munk A.C."/>
            <person name="Nandkeshwar R.D."/>
            <person name="Pitluck S."/>
            <person name="Pollard M."/>
            <person name="Predki P."/>
            <person name="Parson-Quintana B."/>
            <person name="Ramirez L."/>
            <person name="Rash S."/>
            <person name="Retterer J."/>
            <person name="Ricke D.O."/>
            <person name="Robinson D.L."/>
            <person name="Rodriguez A."/>
            <person name="Salamov A."/>
            <person name="Saunders E.H."/>
            <person name="Scott D."/>
            <person name="Shough T."/>
            <person name="Stallings R.L."/>
            <person name="Stalvey M."/>
            <person name="Sutherland R.D."/>
            <person name="Tapia R."/>
            <person name="Tesmer J.G."/>
            <person name="Thayer N."/>
            <person name="Thompson L.S."/>
            <person name="Tice H."/>
            <person name="Torney D.C."/>
            <person name="Tran-Gyamfi M."/>
            <person name="Tsai M."/>
            <person name="Ulanovsky L.E."/>
            <person name="Ustaszewska A."/>
            <person name="Vo N."/>
            <person name="White P.S."/>
            <person name="Williams A.L."/>
            <person name="Wills P.L."/>
            <person name="Wu J.-R."/>
            <person name="Wu K."/>
            <person name="Yang J."/>
            <person name="DeJong P."/>
            <person name="Bruce D."/>
            <person name="Doggett N.A."/>
            <person name="Deaven L."/>
            <person name="Schmutz J."/>
            <person name="Grimwood J."/>
            <person name="Richardson P."/>
            <person name="Rokhsar D.S."/>
            <person name="Eichler E.E."/>
            <person name="Gilna P."/>
            <person name="Lucas S.M."/>
            <person name="Myers R.M."/>
            <person name="Rubin E.M."/>
            <person name="Pennacchio L.A."/>
        </authorList>
    </citation>
    <scope>NUCLEOTIDE SEQUENCE [LARGE SCALE GENOMIC DNA]</scope>
</reference>
<reference key="5">
    <citation type="journal article" date="1996" name="DNA Cell Biol.">
        <title>Transcriptionally active haptoglobin-related (Hpr) gene in Hepatoma G2 and leukamia molt-4 cells.</title>
        <authorList>
            <person name="Tabak S."/>
            <person name="Lev A."/>
            <person name="Valansi C."/>
            <person name="Shalitin C."/>
        </authorList>
    </citation>
    <scope>NUCLEOTIDE SEQUENCE [MRNA] (ISOFORM 2)</scope>
    <scope>ALTERNATIVE SPLICING</scope>
    <scope>TISSUE SPECIFICITY</scope>
</reference>
<reference key="6">
    <citation type="journal article" date="1999" name="Genomics">
        <title>Genome duplications and other features in 12 Mb of DNA sequence from human chromosome 16p and 16q.</title>
        <authorList>
            <person name="Loftus B.J."/>
            <person name="Kim U.-J."/>
            <person name="Sneddon V.P."/>
            <person name="Kalush F."/>
            <person name="Brandon R."/>
            <person name="Fuhrmann J."/>
            <person name="Mason T."/>
            <person name="Crosby M.L."/>
            <person name="Barnstead M."/>
            <person name="Cronin L."/>
            <person name="Mays A.D."/>
            <person name="Cao Y."/>
            <person name="Xu R.X."/>
            <person name="Kang H.-L."/>
            <person name="Mitchell S."/>
            <person name="Eichler E.E."/>
            <person name="Harris P.C."/>
            <person name="Venter J.C."/>
            <person name="Adams M.D."/>
        </authorList>
    </citation>
    <scope>NUCLEOTIDE SEQUENCE [LARGE SCALE GENOMIC DNA] OF 3-348</scope>
</reference>
<reference key="7">
    <citation type="journal article" date="2006" name="Blood">
        <title>Haptoglobin-related protein is a high-affinity hemoglobin-binding plasma protein.</title>
        <authorList>
            <person name="Nielsen M.J."/>
            <person name="Petersen S.V."/>
            <person name="Jacobsen C."/>
            <person name="Oxvig C."/>
            <person name="Rees D."/>
            <person name="Moller H.J."/>
            <person name="Moestrup S.K."/>
        </authorList>
    </citation>
    <scope>FUNCTION</scope>
    <scope>SUBCELLULAR LOCATION</scope>
</reference>
<reference key="8">
    <citation type="journal article" date="2014" name="J. Biol. Chem.">
        <title>A retained secretory signal peptide mediates high density lipoprotein (HDL) assembly and function of haptoglobin-related protein.</title>
        <authorList>
            <person name="Harrington J.M."/>
            <person name="Nishanova T."/>
            <person name="Pena S.R."/>
            <person name="Hess M."/>
            <person name="Scelsi C.L."/>
            <person name="Widener J."/>
            <person name="Hajduk S.L."/>
        </authorList>
    </citation>
    <scope>SIGNAL SEQUENCE</scope>
</reference>
<keyword id="KW-0025">Alternative splicing</keyword>
<keyword id="KW-1015">Disulfide bond</keyword>
<keyword id="KW-0351">Hemoglobin-binding</keyword>
<keyword id="KW-1267">Proteomics identification</keyword>
<keyword id="KW-1185">Reference proteome</keyword>
<keyword id="KW-0964">Secreted</keyword>
<keyword id="KW-0721">Serine protease homolog</keyword>
<keyword id="KW-0732">Signal</keyword>
<keyword id="KW-0768">Sushi</keyword>
<sequence>MSDLGAVISLLLWGRQLFALYSGNDVTDISDDRFPKPPEIANGYVEHLFRYQCKNYYRLRTEGDGVYTLNDKKQWINKAVGDKLPECEAVCGKPKNPANPVQRILGGHLDAKGSFPWQAKMVSHHNLTTGATLINEQWLLTTAKNLFLNHSENATAKDIAPTLTLYVGKKQLVEIEKVVLHPNYHQVDIGLIKLKQKVLVNERVMPICLPSKNYAEVGRVGYVSGWGQSDNFKLTDHLKYVMLPVADQYDCITHYEGSTCPKWKAPKSPVGVQPILNEHTFCVGMSKYQEDTCYGDAGSAFAVHDLEEDTWYAAGILSFDKSCAVAEYGVYVKVTSIQHWVQKTIAEN</sequence>
<evidence type="ECO:0000255" key="1">
    <source>
        <dbReference type="PROSITE-ProRule" id="PRU00274"/>
    </source>
</evidence>
<evidence type="ECO:0000269" key="2">
    <source>
    </source>
</evidence>
<evidence type="ECO:0000269" key="3">
    <source>
    </source>
</evidence>
<evidence type="ECO:0000269" key="4">
    <source>
    </source>
</evidence>
<evidence type="ECO:0000269" key="5">
    <source>
    </source>
</evidence>
<evidence type="ECO:0000269" key="6">
    <source>
    </source>
</evidence>
<evidence type="ECO:0000269" key="7">
    <source>
    </source>
</evidence>
<evidence type="ECO:0000303" key="8">
    <source>
    </source>
</evidence>
<evidence type="ECO:0000305" key="9"/>
<feature type="chain" id="PRO_0000028486" description="Haptoglobin-related protein">
    <location>
        <begin position="1"/>
        <end position="348"/>
    </location>
</feature>
<feature type="signal peptide" description="Not cleaved" evidence="4">
    <location>
        <begin position="1"/>
        <end position="18"/>
    </location>
</feature>
<feature type="domain" description="Sushi">
    <location>
        <begin position="34"/>
        <end position="87"/>
    </location>
</feature>
<feature type="domain" description="Peptidase S1" evidence="1">
    <location>
        <begin position="104"/>
        <end position="346"/>
    </location>
</feature>
<feature type="disulfide bond" evidence="1">
    <location>
        <begin position="251"/>
        <end position="282"/>
    </location>
</feature>
<feature type="disulfide bond" evidence="1">
    <location>
        <begin position="293"/>
        <end position="323"/>
    </location>
</feature>
<feature type="splice variant" id="VSP_014529" description="In isoform 2." evidence="8">
    <original>M</original>
    <variation>MHVCVCVCVCVYMPVCVDACMCCEAGRPAFRSFLFSLC</variation>
    <location>
        <position position="1"/>
    </location>
</feature>
<feature type="sequence variant" id="VAR_057161" description="In dbSNP:rs11642506.">
    <original>T</original>
    <variation>M</variation>
    <location>
        <position position="27"/>
    </location>
</feature>
<feature type="sequence variant" id="VAR_057162" description="In dbSNP:rs152832.">
    <original>N</original>
    <variation>H</variation>
    <location>
        <position position="42"/>
    </location>
</feature>
<feature type="sequence variant" id="VAR_057163" description="In dbSNP:rs152833.">
    <original>R</original>
    <variation>K</variation>
    <location>
        <position position="58"/>
    </location>
</feature>
<feature type="sequence variant" id="VAR_059789" description="In dbSNP:rs1049933.">
    <original>A</original>
    <variation>V</variation>
    <location>
        <position position="156"/>
    </location>
</feature>
<feature type="sequence variant" id="VAR_057164" description="In dbSNP:rs2021171.">
    <original>R</original>
    <variation>K</variation>
    <location>
        <position position="203"/>
    </location>
</feature>
<feature type="sequence variant" id="VAR_057165" description="In dbSNP:rs1065360.">
    <original>V</original>
    <variation>A</variation>
    <location>
        <position position="283"/>
    </location>
</feature>
<feature type="sequence variant" id="VAR_014571" description="In dbSNP:rs12646." evidence="2 5 6">
    <original>H</original>
    <variation>D</variation>
    <location>
        <position position="339"/>
    </location>
</feature>
<feature type="sequence conflict" description="In Ref. 1; CAA25927." evidence="9" ref="1">
    <original>L</original>
    <variation>I</variation>
    <location>
        <position position="191"/>
    </location>
</feature>
<gene>
    <name type="primary">HPR</name>
</gene>
<comment type="function">
    <text evidence="3">Primate-specific plasma protein associated with apolipoprotein L-I (apoL-I)-containing high-density lipoprotein (HDL). This HDL particle, termed trypanosome lytic factor-1 (TLF-1), mediates human innate immune protection against many species of African trypanosomes. Binds hemoglobin with high affinity and may contribute to the clearance of cell-free hemoglobin to allow hepatic recycling of heme iron.</text>
</comment>
<comment type="subcellular location">
    <subcellularLocation>
        <location evidence="3">Secreted</location>
    </subcellularLocation>
    <text evidence="3">Secreted into blood plasma and associated with subtypes of high density lipoproteins (HDL).</text>
</comment>
<comment type="alternative products">
    <event type="alternative splicing"/>
    <isoform>
        <id>P00739-1</id>
        <name>1</name>
        <sequence type="displayed"/>
    </isoform>
    <isoform>
        <id>P00739-2</id>
        <name>2</name>
        <sequence type="described" ref="VSP_014529"/>
    </isoform>
</comment>
<comment type="tissue specificity">
    <text evidence="7">In adult liver the amount of HPR mRNA is at the lower limit of detection, therefore the extent of its expression is at most less than 1000-fold that of the HP1F gene. No HPR mRNA can be detected in fetal liver. Expressed in Hep-G2 and leukemia MOLT-4 cell lines.</text>
</comment>
<comment type="domain">
    <text evidence="4">The uncleaved signal sequence interacts with HDL fluid lipids and mediates incorporation into the HDL particle.</text>
</comment>
<comment type="similarity">
    <text evidence="1">Belongs to the peptidase S1 family.</text>
</comment>
<comment type="caution">
    <text evidence="9">Although homologous to serine proteases, it has lost all essential catalytic residues and has no enzymatic activity.</text>
</comment>
<accession>P00739</accession>
<accession>Q7LE20</accession>
<accession>Q92658</accession>
<accession>Q92659</accession>
<accession>Q9ULB0</accession>
<dbReference type="EMBL" id="X01794">
    <property type="protein sequence ID" value="CAA25927.1"/>
    <property type="molecule type" value="Genomic_DNA"/>
</dbReference>
<dbReference type="EMBL" id="X01787">
    <property type="protein sequence ID" value="CAA25927.1"/>
    <property type="status" value="JOINED"/>
    <property type="molecule type" value="Genomic_DNA"/>
</dbReference>
<dbReference type="EMBL" id="X01788">
    <property type="protein sequence ID" value="CAA25927.1"/>
    <property type="status" value="JOINED"/>
    <property type="molecule type" value="Genomic_DNA"/>
</dbReference>
<dbReference type="EMBL" id="X01790">
    <property type="protein sequence ID" value="CAA25927.1"/>
    <property type="status" value="JOINED"/>
    <property type="molecule type" value="Genomic_DNA"/>
</dbReference>
<dbReference type="EMBL" id="X01792">
    <property type="protein sequence ID" value="CAA25927.1"/>
    <property type="status" value="JOINED"/>
    <property type="molecule type" value="Genomic_DNA"/>
</dbReference>
<dbReference type="EMBL" id="K03431">
    <property type="protein sequence ID" value="AAA88081.1"/>
    <property type="molecule type" value="Genomic_DNA"/>
</dbReference>
<dbReference type="EMBL" id="M10935">
    <property type="protein sequence ID" value="AAA88081.1"/>
    <property type="status" value="JOINED"/>
    <property type="molecule type" value="Genomic_DNA"/>
</dbReference>
<dbReference type="EMBL" id="M69197">
    <property type="protein sequence ID" value="AAA88079.1"/>
    <property type="molecule type" value="Genomic_DNA"/>
</dbReference>
<dbReference type="EMBL" id="X89214">
    <property type="protein sequence ID" value="CAA61501.1"/>
    <property type="molecule type" value="mRNA"/>
</dbReference>
<dbReference type="EMBL" id="AC009087">
    <property type="status" value="NOT_ANNOTATED_CDS"/>
    <property type="molecule type" value="Genomic_DNA"/>
</dbReference>
<dbReference type="EMBL" id="AC004682">
    <property type="protein sequence ID" value="AAC27433.1"/>
    <property type="molecule type" value="Genomic_DNA"/>
</dbReference>
<dbReference type="CCDS" id="CCDS42193.1">
    <molecule id="P00739-1"/>
</dbReference>
<dbReference type="PIR" id="A00919">
    <property type="entry name" value="HPHUR"/>
</dbReference>
<dbReference type="RefSeq" id="NP_066275.3">
    <molecule id="P00739-1"/>
    <property type="nucleotide sequence ID" value="NM_020995.3"/>
</dbReference>
<dbReference type="SMR" id="P00739"/>
<dbReference type="BioGRID" id="109487">
    <property type="interactions" value="19"/>
</dbReference>
<dbReference type="CORUM" id="P00739"/>
<dbReference type="FunCoup" id="P00739">
    <property type="interactions" value="146"/>
</dbReference>
<dbReference type="IntAct" id="P00739">
    <property type="interactions" value="11"/>
</dbReference>
<dbReference type="STRING" id="9606.ENSP00000441828"/>
<dbReference type="DrugBank" id="DB09130">
    <property type="generic name" value="Copper"/>
</dbReference>
<dbReference type="DrugBank" id="DB01593">
    <property type="generic name" value="Zinc"/>
</dbReference>
<dbReference type="DrugBank" id="DB14487">
    <property type="generic name" value="Zinc acetate"/>
</dbReference>
<dbReference type="MEROPS" id="S01.974"/>
<dbReference type="iPTMnet" id="P00739"/>
<dbReference type="PhosphoSitePlus" id="P00739"/>
<dbReference type="BioMuta" id="HPR"/>
<dbReference type="DMDM" id="262527547"/>
<dbReference type="jPOST" id="P00739"/>
<dbReference type="MassIVE" id="P00739"/>
<dbReference type="PaxDb" id="9606-ENSP00000441828"/>
<dbReference type="PeptideAtlas" id="P00739"/>
<dbReference type="PRIDE" id="P00739"/>
<dbReference type="ProteomicsDB" id="51272">
    <molecule id="P00739-1"/>
</dbReference>
<dbReference type="ProteomicsDB" id="51273">
    <molecule id="P00739-2"/>
</dbReference>
<dbReference type="Pumba" id="P00739"/>
<dbReference type="Antibodypedia" id="63671">
    <property type="antibodies" value="241 antibodies from 22 providers"/>
</dbReference>
<dbReference type="DNASU" id="3250"/>
<dbReference type="Ensembl" id="ENST00000540303.7">
    <molecule id="P00739-1"/>
    <property type="protein sequence ID" value="ENSP00000441828.2"/>
    <property type="gene ID" value="ENSG00000261701.9"/>
</dbReference>
<dbReference type="GeneID" id="3250"/>
<dbReference type="KEGG" id="hsa:3250"/>
<dbReference type="MANE-Select" id="ENST00000540303.7">
    <property type="protein sequence ID" value="ENSP00000441828.2"/>
    <property type="RefSeq nucleotide sequence ID" value="NM_020995.4"/>
    <property type="RefSeq protein sequence ID" value="NP_066275.3"/>
</dbReference>
<dbReference type="UCSC" id="uc002fby.4">
    <molecule id="P00739-1"/>
    <property type="organism name" value="human"/>
</dbReference>
<dbReference type="AGR" id="HGNC:5156"/>
<dbReference type="CTD" id="3250"/>
<dbReference type="DisGeNET" id="3250"/>
<dbReference type="GeneCards" id="HPR"/>
<dbReference type="HGNC" id="HGNC:5156">
    <property type="gene designation" value="HPR"/>
</dbReference>
<dbReference type="HPA" id="ENSG00000261701">
    <property type="expression patterns" value="Tissue enriched (liver)"/>
</dbReference>
<dbReference type="MIM" id="140210">
    <property type="type" value="gene"/>
</dbReference>
<dbReference type="neXtProt" id="NX_P00739"/>
<dbReference type="OpenTargets" id="ENSG00000261701"/>
<dbReference type="PharmGKB" id="PA29426"/>
<dbReference type="VEuPathDB" id="HostDB:ENSG00000261701"/>
<dbReference type="eggNOG" id="KOG3627">
    <property type="taxonomic scope" value="Eukaryota"/>
</dbReference>
<dbReference type="GeneTree" id="ENSGT00940000159903"/>
<dbReference type="HOGENOM" id="CLU_006842_0_0_1"/>
<dbReference type="InParanoid" id="P00739"/>
<dbReference type="OMA" id="YMKISSY"/>
<dbReference type="OrthoDB" id="6339452at2759"/>
<dbReference type="PAN-GO" id="P00739">
    <property type="GO annotations" value="6 GO annotations based on evolutionary models"/>
</dbReference>
<dbReference type="PhylomeDB" id="P00739"/>
<dbReference type="TreeFam" id="TF334326"/>
<dbReference type="PathwayCommons" id="P00739"/>
<dbReference type="Reactome" id="R-HSA-2168880">
    <property type="pathway name" value="Scavenging of heme from plasma"/>
</dbReference>
<dbReference type="SignaLink" id="P00739"/>
<dbReference type="BioGRID-ORCS" id="3250">
    <property type="hits" value="28 hits in 1076 CRISPR screens"/>
</dbReference>
<dbReference type="ChiTaRS" id="HPR">
    <property type="organism name" value="human"/>
</dbReference>
<dbReference type="GeneWiki" id="HPR_(gene)"/>
<dbReference type="GenomeRNAi" id="3250"/>
<dbReference type="Pharos" id="P00739">
    <property type="development level" value="Tbio"/>
</dbReference>
<dbReference type="PRO" id="PR:P00739"/>
<dbReference type="Proteomes" id="UP000005640">
    <property type="component" value="Chromosome 16"/>
</dbReference>
<dbReference type="RNAct" id="P00739">
    <property type="molecule type" value="protein"/>
</dbReference>
<dbReference type="Bgee" id="ENSG00000261701">
    <property type="expression patterns" value="Expressed in right lobe of liver and 120 other cell types or tissues"/>
</dbReference>
<dbReference type="ExpressionAtlas" id="P00739">
    <property type="expression patterns" value="baseline and differential"/>
</dbReference>
<dbReference type="GO" id="GO:0072562">
    <property type="term" value="C:blood microparticle"/>
    <property type="evidence" value="ECO:0007005"/>
    <property type="project" value="UniProtKB"/>
</dbReference>
<dbReference type="GO" id="GO:0070062">
    <property type="term" value="C:extracellular exosome"/>
    <property type="evidence" value="ECO:0007005"/>
    <property type="project" value="UniProtKB"/>
</dbReference>
<dbReference type="GO" id="GO:0005576">
    <property type="term" value="C:extracellular region"/>
    <property type="evidence" value="ECO:0000304"/>
    <property type="project" value="Reactome"/>
</dbReference>
<dbReference type="GO" id="GO:0005615">
    <property type="term" value="C:extracellular space"/>
    <property type="evidence" value="ECO:0000318"/>
    <property type="project" value="GO_Central"/>
</dbReference>
<dbReference type="GO" id="GO:0034366">
    <property type="term" value="C:spherical high-density lipoprotein particle"/>
    <property type="evidence" value="ECO:0000314"/>
    <property type="project" value="BHF-UCL"/>
</dbReference>
<dbReference type="GO" id="GO:0030492">
    <property type="term" value="F:hemoglobin binding"/>
    <property type="evidence" value="ECO:0000303"/>
    <property type="project" value="UniProtKB"/>
</dbReference>
<dbReference type="GO" id="GO:0004252">
    <property type="term" value="F:serine-type endopeptidase activity"/>
    <property type="evidence" value="ECO:0000318"/>
    <property type="project" value="GO_Central"/>
</dbReference>
<dbReference type="GO" id="GO:0031638">
    <property type="term" value="P:zymogen activation"/>
    <property type="evidence" value="ECO:0000318"/>
    <property type="project" value="GO_Central"/>
</dbReference>
<dbReference type="CDD" id="cd00190">
    <property type="entry name" value="Tryp_SPc"/>
    <property type="match status" value="1"/>
</dbReference>
<dbReference type="FunFam" id="2.10.70.10:FF:000048">
    <property type="entry name" value="Haptoglobin"/>
    <property type="match status" value="1"/>
</dbReference>
<dbReference type="FunFam" id="2.40.10.10:FF:000027">
    <property type="entry name" value="Haptoglobin"/>
    <property type="match status" value="1"/>
</dbReference>
<dbReference type="FunFam" id="2.40.10.10:FF:000031">
    <property type="entry name" value="Haptoglobin"/>
    <property type="match status" value="1"/>
</dbReference>
<dbReference type="Gene3D" id="2.10.70.10">
    <property type="entry name" value="Complement Module, domain 1"/>
    <property type="match status" value="1"/>
</dbReference>
<dbReference type="Gene3D" id="2.40.10.10">
    <property type="entry name" value="Trypsin-like serine proteases"/>
    <property type="match status" value="2"/>
</dbReference>
<dbReference type="InterPro" id="IPR008292">
    <property type="entry name" value="Haptoglobin"/>
</dbReference>
<dbReference type="InterPro" id="IPR009003">
    <property type="entry name" value="Peptidase_S1_PA"/>
</dbReference>
<dbReference type="InterPro" id="IPR043504">
    <property type="entry name" value="Peptidase_S1_PA_chymotrypsin"/>
</dbReference>
<dbReference type="InterPro" id="IPR001314">
    <property type="entry name" value="Peptidase_S1A"/>
</dbReference>
<dbReference type="InterPro" id="IPR035976">
    <property type="entry name" value="Sushi/SCR/CCP_sf"/>
</dbReference>
<dbReference type="InterPro" id="IPR001254">
    <property type="entry name" value="Trypsin_dom"/>
</dbReference>
<dbReference type="PANTHER" id="PTHR24255">
    <property type="entry name" value="COMPLEMENT COMPONENT 1, S SUBCOMPONENT-RELATED"/>
    <property type="match status" value="1"/>
</dbReference>
<dbReference type="PANTHER" id="PTHR24255:SF27">
    <property type="entry name" value="HAPTOGLOBIN-RELATED PROTEIN"/>
    <property type="match status" value="1"/>
</dbReference>
<dbReference type="Pfam" id="PF00089">
    <property type="entry name" value="Trypsin"/>
    <property type="match status" value="1"/>
</dbReference>
<dbReference type="PIRSF" id="PIRSF001137">
    <property type="entry name" value="Haptoglobin"/>
    <property type="match status" value="1"/>
</dbReference>
<dbReference type="PRINTS" id="PR00722">
    <property type="entry name" value="CHYMOTRYPSIN"/>
</dbReference>
<dbReference type="SMART" id="SM00020">
    <property type="entry name" value="Tryp_SPc"/>
    <property type="match status" value="1"/>
</dbReference>
<dbReference type="SUPFAM" id="SSF57535">
    <property type="entry name" value="Complement control module/SCR domain"/>
    <property type="match status" value="1"/>
</dbReference>
<dbReference type="SUPFAM" id="SSF50494">
    <property type="entry name" value="Trypsin-like serine proteases"/>
    <property type="match status" value="1"/>
</dbReference>
<dbReference type="PROSITE" id="PS50240">
    <property type="entry name" value="TRYPSIN_DOM"/>
    <property type="match status" value="1"/>
</dbReference>
<name>HPTR_HUMAN</name>
<proteinExistence type="evidence at protein level"/>
<organism>
    <name type="scientific">Homo sapiens</name>
    <name type="common">Human</name>
    <dbReference type="NCBI Taxonomy" id="9606"/>
    <lineage>
        <taxon>Eukaryota</taxon>
        <taxon>Metazoa</taxon>
        <taxon>Chordata</taxon>
        <taxon>Craniata</taxon>
        <taxon>Vertebrata</taxon>
        <taxon>Euteleostomi</taxon>
        <taxon>Mammalia</taxon>
        <taxon>Eutheria</taxon>
        <taxon>Euarchontoglires</taxon>
        <taxon>Primates</taxon>
        <taxon>Haplorrhini</taxon>
        <taxon>Catarrhini</taxon>
        <taxon>Hominidae</taxon>
        <taxon>Homo</taxon>
    </lineage>
</organism>
<protein>
    <recommendedName>
        <fullName>Haptoglobin-related protein</fullName>
    </recommendedName>
</protein>